<organism>
    <name type="scientific">Pyrococcus horikoshii (strain ATCC 700860 / DSM 12428 / JCM 9974 / NBRC 100139 / OT-3)</name>
    <dbReference type="NCBI Taxonomy" id="70601"/>
    <lineage>
        <taxon>Archaea</taxon>
        <taxon>Methanobacteriati</taxon>
        <taxon>Methanobacteriota</taxon>
        <taxon>Thermococci</taxon>
        <taxon>Thermococcales</taxon>
        <taxon>Thermococcaceae</taxon>
        <taxon>Pyrococcus</taxon>
    </lineage>
</organism>
<evidence type="ECO:0000255" key="1">
    <source>
        <dbReference type="HAMAP-Rule" id="MF_01111"/>
    </source>
</evidence>
<gene>
    <name type="ordered locus">PH1008</name>
</gene>
<protein>
    <recommendedName>
        <fullName evidence="1">UPF0200 protein PH1008</fullName>
    </recommendedName>
</protein>
<comment type="similarity">
    <text evidence="1">Belongs to the UPF0200 family.</text>
</comment>
<reference key="1">
    <citation type="journal article" date="1998" name="DNA Res.">
        <title>Complete sequence and gene organization of the genome of a hyper-thermophilic archaebacterium, Pyrococcus horikoshii OT3.</title>
        <authorList>
            <person name="Kawarabayasi Y."/>
            <person name="Sawada M."/>
            <person name="Horikawa H."/>
            <person name="Haikawa Y."/>
            <person name="Hino Y."/>
            <person name="Yamamoto S."/>
            <person name="Sekine M."/>
            <person name="Baba S."/>
            <person name="Kosugi H."/>
            <person name="Hosoyama A."/>
            <person name="Nagai Y."/>
            <person name="Sakai M."/>
            <person name="Ogura K."/>
            <person name="Otsuka R."/>
            <person name="Nakazawa H."/>
            <person name="Takamiya M."/>
            <person name="Ohfuku Y."/>
            <person name="Funahashi T."/>
            <person name="Tanaka T."/>
            <person name="Kudoh Y."/>
            <person name="Yamazaki J."/>
            <person name="Kushida N."/>
            <person name="Oguchi A."/>
            <person name="Aoki K."/>
            <person name="Yoshizawa T."/>
            <person name="Nakamura Y."/>
            <person name="Robb F.T."/>
            <person name="Horikoshi K."/>
            <person name="Masuchi Y."/>
            <person name="Shizuya H."/>
            <person name="Kikuchi H."/>
        </authorList>
    </citation>
    <scope>NUCLEOTIDE SEQUENCE [LARGE SCALE GENOMIC DNA]</scope>
    <source>
        <strain>ATCC 700860 / DSM 12428 / JCM 9974 / NBRC 100139 / OT-3</strain>
    </source>
</reference>
<accession>O58736</accession>
<keyword id="KW-0067">ATP-binding</keyword>
<keyword id="KW-0547">Nucleotide-binding</keyword>
<sequence length="186" mass="21090">MIILLVGMPGSGKGEVAKAFRRRGIPVISMGDAIREEAEKRGIPKTPEGLKYVSLKVREELGPGAVAILTIPKVRGIIKRKGIVVIEGVRSPAEVQEFRREFKNERVIILAIHSPPKVRFERLRRRGRSDDPKTWNEFLDRDKKELGFGIGEVMSLADYVILNNCTFNEFQRKIEKVVSKILSNWP</sequence>
<name>Y1008_PYRHO</name>
<proteinExistence type="inferred from homology"/>
<feature type="chain" id="PRO_0000094532" description="UPF0200 protein PH1008">
    <location>
        <begin position="1"/>
        <end position="186"/>
    </location>
</feature>
<feature type="binding site" evidence="1">
    <location>
        <begin position="7"/>
        <end position="14"/>
    </location>
    <ligand>
        <name>ATP</name>
        <dbReference type="ChEBI" id="CHEBI:30616"/>
    </ligand>
</feature>
<dbReference type="EMBL" id="BA000001">
    <property type="protein sequence ID" value="BAA30105.1"/>
    <property type="molecule type" value="Genomic_DNA"/>
</dbReference>
<dbReference type="PIR" id="C71093">
    <property type="entry name" value="C71093"/>
</dbReference>
<dbReference type="RefSeq" id="WP_010885094.1">
    <property type="nucleotide sequence ID" value="NC_000961.1"/>
</dbReference>
<dbReference type="SMR" id="O58736"/>
<dbReference type="STRING" id="70601.gene:9377965"/>
<dbReference type="EnsemblBacteria" id="BAA30105">
    <property type="protein sequence ID" value="BAA30105"/>
    <property type="gene ID" value="BAA30105"/>
</dbReference>
<dbReference type="GeneID" id="1443329"/>
<dbReference type="KEGG" id="pho:PH1008"/>
<dbReference type="eggNOG" id="arCOG01045">
    <property type="taxonomic scope" value="Archaea"/>
</dbReference>
<dbReference type="OrthoDB" id="85381at2157"/>
<dbReference type="Proteomes" id="UP000000752">
    <property type="component" value="Chromosome"/>
</dbReference>
<dbReference type="GO" id="GO:0005524">
    <property type="term" value="F:ATP binding"/>
    <property type="evidence" value="ECO:0007669"/>
    <property type="project" value="UniProtKB-UniRule"/>
</dbReference>
<dbReference type="Gene3D" id="3.40.50.300">
    <property type="entry name" value="P-loop containing nucleotide triphosphate hydrolases"/>
    <property type="match status" value="1"/>
</dbReference>
<dbReference type="HAMAP" id="MF_01111">
    <property type="entry name" value="UPF0200"/>
    <property type="match status" value="1"/>
</dbReference>
<dbReference type="InterPro" id="IPR022970">
    <property type="entry name" value="NTP_hydrolase-rel"/>
</dbReference>
<dbReference type="InterPro" id="IPR027417">
    <property type="entry name" value="P-loop_NTPase"/>
</dbReference>
<dbReference type="PANTHER" id="PTHR41930:SF1">
    <property type="entry name" value="DEPHOSPHO-COA KINASE"/>
    <property type="match status" value="1"/>
</dbReference>
<dbReference type="PANTHER" id="PTHR41930">
    <property type="entry name" value="UPF0200 PROTEIN MJ1399"/>
    <property type="match status" value="1"/>
</dbReference>
<dbReference type="Pfam" id="PF13207">
    <property type="entry name" value="AAA_17"/>
    <property type="match status" value="1"/>
</dbReference>
<dbReference type="SUPFAM" id="SSF52540">
    <property type="entry name" value="P-loop containing nucleoside triphosphate hydrolases"/>
    <property type="match status" value="1"/>
</dbReference>